<dbReference type="EC" id="7.1.1.-" evidence="1"/>
<dbReference type="EMBL" id="AP009370">
    <property type="protein sequence ID" value="BAF50114.1"/>
    <property type="molecule type" value="Genomic_DNA"/>
</dbReference>
<dbReference type="RefSeq" id="YP_001123290.1">
    <property type="nucleotide sequence ID" value="NC_009269.1"/>
</dbReference>
<dbReference type="SMR" id="A4QKA9"/>
<dbReference type="GeneID" id="4961854"/>
<dbReference type="GO" id="GO:0009535">
    <property type="term" value="C:chloroplast thylakoid membrane"/>
    <property type="evidence" value="ECO:0007669"/>
    <property type="project" value="UniProtKB-SubCell"/>
</dbReference>
<dbReference type="GO" id="GO:0045271">
    <property type="term" value="C:respiratory chain complex I"/>
    <property type="evidence" value="ECO:0007669"/>
    <property type="project" value="TreeGrafter"/>
</dbReference>
<dbReference type="GO" id="GO:0051539">
    <property type="term" value="F:4 iron, 4 sulfur cluster binding"/>
    <property type="evidence" value="ECO:0007669"/>
    <property type="project" value="UniProtKB-KW"/>
</dbReference>
<dbReference type="GO" id="GO:0005506">
    <property type="term" value="F:iron ion binding"/>
    <property type="evidence" value="ECO:0007669"/>
    <property type="project" value="UniProtKB-UniRule"/>
</dbReference>
<dbReference type="GO" id="GO:0008137">
    <property type="term" value="F:NADH dehydrogenase (ubiquinone) activity"/>
    <property type="evidence" value="ECO:0007669"/>
    <property type="project" value="InterPro"/>
</dbReference>
<dbReference type="GO" id="GO:0048038">
    <property type="term" value="F:quinone binding"/>
    <property type="evidence" value="ECO:0007669"/>
    <property type="project" value="UniProtKB-KW"/>
</dbReference>
<dbReference type="GO" id="GO:0009060">
    <property type="term" value="P:aerobic respiration"/>
    <property type="evidence" value="ECO:0007669"/>
    <property type="project" value="TreeGrafter"/>
</dbReference>
<dbReference type="GO" id="GO:0015990">
    <property type="term" value="P:electron transport coupled proton transport"/>
    <property type="evidence" value="ECO:0007669"/>
    <property type="project" value="TreeGrafter"/>
</dbReference>
<dbReference type="GO" id="GO:0019684">
    <property type="term" value="P:photosynthesis, light reaction"/>
    <property type="evidence" value="ECO:0007669"/>
    <property type="project" value="UniProtKB-UniRule"/>
</dbReference>
<dbReference type="FunFam" id="3.40.50.12280:FF:000003">
    <property type="entry name" value="NAD(P)H-quinone oxidoreductase subunit K, chloroplastic"/>
    <property type="match status" value="1"/>
</dbReference>
<dbReference type="Gene3D" id="3.40.50.12280">
    <property type="match status" value="1"/>
</dbReference>
<dbReference type="HAMAP" id="MF_01356">
    <property type="entry name" value="NDH1_NuoB"/>
    <property type="match status" value="1"/>
</dbReference>
<dbReference type="InterPro" id="IPR006137">
    <property type="entry name" value="NADH_UbQ_OxRdtase-like_20kDa"/>
</dbReference>
<dbReference type="InterPro" id="IPR006138">
    <property type="entry name" value="NADH_UQ_OxRdtase_20Kd_su"/>
</dbReference>
<dbReference type="NCBIfam" id="TIGR01957">
    <property type="entry name" value="nuoB_fam"/>
    <property type="match status" value="1"/>
</dbReference>
<dbReference type="NCBIfam" id="NF005012">
    <property type="entry name" value="PRK06411.1"/>
    <property type="match status" value="1"/>
</dbReference>
<dbReference type="PANTHER" id="PTHR11995">
    <property type="entry name" value="NADH DEHYDROGENASE"/>
    <property type="match status" value="1"/>
</dbReference>
<dbReference type="PANTHER" id="PTHR11995:SF14">
    <property type="entry name" value="NADH DEHYDROGENASE [UBIQUINONE] IRON-SULFUR PROTEIN 7, MITOCHONDRIAL"/>
    <property type="match status" value="1"/>
</dbReference>
<dbReference type="Pfam" id="PF01058">
    <property type="entry name" value="Oxidored_q6"/>
    <property type="match status" value="1"/>
</dbReference>
<dbReference type="SUPFAM" id="SSF56770">
    <property type="entry name" value="HydA/Nqo6-like"/>
    <property type="match status" value="1"/>
</dbReference>
<dbReference type="PROSITE" id="PS01150">
    <property type="entry name" value="COMPLEX1_20K"/>
    <property type="match status" value="1"/>
</dbReference>
<name>NDHK_BARVE</name>
<sequence>MNSIKFPVLDRTTKNSVISTTLNDLSNWSRLSSLWPLLYGTSCCFIEFASLIGSRFDFDRYGLVPRSSPRQADLILTAGTVTMKMAPSLVRLYEQMPEPKYVIAMGACTITGGMFSTDSYSTVRGVDKLIPVDVYLPGCPPKPEAVIDAITKLRKKIAREIYKDRIRPQRGNRCFTTNHKFFVVGSPHTGNYDQELLYAPSSTSEISTETFFKYKSPVSSNELVN</sequence>
<protein>
    <recommendedName>
        <fullName evidence="1">NAD(P)H-quinone oxidoreductase subunit K, chloroplastic</fullName>
        <ecNumber evidence="1">7.1.1.-</ecNumber>
    </recommendedName>
    <alternativeName>
        <fullName evidence="1">NAD(P)H dehydrogenase subunit K</fullName>
    </alternativeName>
    <alternativeName>
        <fullName evidence="1">NADH-plastoquinone oxidoreductase subunit K</fullName>
    </alternativeName>
</protein>
<keyword id="KW-0004">4Fe-4S</keyword>
<keyword id="KW-0150">Chloroplast</keyword>
<keyword id="KW-0408">Iron</keyword>
<keyword id="KW-0411">Iron-sulfur</keyword>
<keyword id="KW-0472">Membrane</keyword>
<keyword id="KW-0479">Metal-binding</keyword>
<keyword id="KW-0520">NAD</keyword>
<keyword id="KW-0521">NADP</keyword>
<keyword id="KW-0934">Plastid</keyword>
<keyword id="KW-0618">Plastoquinone</keyword>
<keyword id="KW-0874">Quinone</keyword>
<keyword id="KW-0793">Thylakoid</keyword>
<keyword id="KW-1278">Translocase</keyword>
<keyword id="KW-0813">Transport</keyword>
<feature type="chain" id="PRO_0000358522" description="NAD(P)H-quinone oxidoreductase subunit K, chloroplastic">
    <location>
        <begin position="1"/>
        <end position="225"/>
    </location>
</feature>
<feature type="binding site" evidence="1">
    <location>
        <position position="43"/>
    </location>
    <ligand>
        <name>[4Fe-4S] cluster</name>
        <dbReference type="ChEBI" id="CHEBI:49883"/>
    </ligand>
</feature>
<feature type="binding site" evidence="1">
    <location>
        <position position="44"/>
    </location>
    <ligand>
        <name>[4Fe-4S] cluster</name>
        <dbReference type="ChEBI" id="CHEBI:49883"/>
    </ligand>
</feature>
<feature type="binding site" evidence="1">
    <location>
        <position position="108"/>
    </location>
    <ligand>
        <name>[4Fe-4S] cluster</name>
        <dbReference type="ChEBI" id="CHEBI:49883"/>
    </ligand>
</feature>
<feature type="binding site" evidence="1">
    <location>
        <position position="139"/>
    </location>
    <ligand>
        <name>[4Fe-4S] cluster</name>
        <dbReference type="ChEBI" id="CHEBI:49883"/>
    </ligand>
</feature>
<geneLocation type="chloroplast"/>
<evidence type="ECO:0000255" key="1">
    <source>
        <dbReference type="HAMAP-Rule" id="MF_01356"/>
    </source>
</evidence>
<gene>
    <name evidence="1" type="primary">ndhK</name>
</gene>
<comment type="function">
    <text evidence="1">NDH shuttles electrons from NAD(P)H:plastoquinone, via FMN and iron-sulfur (Fe-S) centers, to quinones in the photosynthetic chain and possibly in a chloroplast respiratory chain. The immediate electron acceptor for the enzyme in this species is believed to be plastoquinone. Couples the redox reaction to proton translocation, and thus conserves the redox energy in a proton gradient.</text>
</comment>
<comment type="catalytic activity">
    <reaction evidence="1">
        <text>a plastoquinone + NADH + (n+1) H(+)(in) = a plastoquinol + NAD(+) + n H(+)(out)</text>
        <dbReference type="Rhea" id="RHEA:42608"/>
        <dbReference type="Rhea" id="RHEA-COMP:9561"/>
        <dbReference type="Rhea" id="RHEA-COMP:9562"/>
        <dbReference type="ChEBI" id="CHEBI:15378"/>
        <dbReference type="ChEBI" id="CHEBI:17757"/>
        <dbReference type="ChEBI" id="CHEBI:57540"/>
        <dbReference type="ChEBI" id="CHEBI:57945"/>
        <dbReference type="ChEBI" id="CHEBI:62192"/>
    </reaction>
</comment>
<comment type="catalytic activity">
    <reaction evidence="1">
        <text>a plastoquinone + NADPH + (n+1) H(+)(in) = a plastoquinol + NADP(+) + n H(+)(out)</text>
        <dbReference type="Rhea" id="RHEA:42612"/>
        <dbReference type="Rhea" id="RHEA-COMP:9561"/>
        <dbReference type="Rhea" id="RHEA-COMP:9562"/>
        <dbReference type="ChEBI" id="CHEBI:15378"/>
        <dbReference type="ChEBI" id="CHEBI:17757"/>
        <dbReference type="ChEBI" id="CHEBI:57783"/>
        <dbReference type="ChEBI" id="CHEBI:58349"/>
        <dbReference type="ChEBI" id="CHEBI:62192"/>
    </reaction>
</comment>
<comment type="cofactor">
    <cofactor evidence="1">
        <name>[4Fe-4S] cluster</name>
        <dbReference type="ChEBI" id="CHEBI:49883"/>
    </cofactor>
    <text evidence="1">Binds 1 [4Fe-4S] cluster.</text>
</comment>
<comment type="subunit">
    <text evidence="1">NDH is composed of at least 16 different subunits, 5 of which are encoded in the nucleus.</text>
</comment>
<comment type="subcellular location">
    <subcellularLocation>
        <location evidence="1">Plastid</location>
        <location evidence="1">Chloroplast thylakoid membrane</location>
        <topology evidence="1">Peripheral membrane protein</topology>
        <orientation evidence="1">Stromal side</orientation>
    </subcellularLocation>
</comment>
<comment type="similarity">
    <text evidence="1">Belongs to the complex I 20 kDa subunit family.</text>
</comment>
<accession>A4QKA9</accession>
<organism>
    <name type="scientific">Barbarea verna</name>
    <name type="common">Land cress</name>
    <name type="synonym">Erysimum vernum</name>
    <dbReference type="NCBI Taxonomy" id="50458"/>
    <lineage>
        <taxon>Eukaryota</taxon>
        <taxon>Viridiplantae</taxon>
        <taxon>Streptophyta</taxon>
        <taxon>Embryophyta</taxon>
        <taxon>Tracheophyta</taxon>
        <taxon>Spermatophyta</taxon>
        <taxon>Magnoliopsida</taxon>
        <taxon>eudicotyledons</taxon>
        <taxon>Gunneridae</taxon>
        <taxon>Pentapetalae</taxon>
        <taxon>rosids</taxon>
        <taxon>malvids</taxon>
        <taxon>Brassicales</taxon>
        <taxon>Brassicaceae</taxon>
        <taxon>Cardamineae</taxon>
        <taxon>Barbarea</taxon>
    </lineage>
</organism>
<proteinExistence type="inferred from homology"/>
<reference key="1">
    <citation type="submission" date="2007-03" db="EMBL/GenBank/DDBJ databases">
        <title>Sequencing analysis of Barbarea verna chloroplast DNA.</title>
        <authorList>
            <person name="Hosouchi T."/>
            <person name="Tsuruoka H."/>
            <person name="Kotani H."/>
        </authorList>
    </citation>
    <scope>NUCLEOTIDE SEQUENCE [LARGE SCALE GENOMIC DNA]</scope>
</reference>